<comment type="similarity">
    <text evidence="1">Belongs to the eukaryotic ribosomal protein eS1 family.</text>
</comment>
<sequence length="201" mass="22446">MAKKKQAGRRVEGWKAKSWFKVYTPDNLGKAYIGDTIASEVETVKGRIMQATLGEITNDYAKQHIKMSFKIAEVTGDAAYTEFVGHEVTRDYLRSLVKRRSSRIDCHVQVVTKDNKKVRLTISCYTFARANIAQEHALRNAITAGLVAQAQAWDLNTLVNGVVSGEISKDLFKLVKTLYPTRRVEIIKSKVEQVAAPVSTA</sequence>
<dbReference type="EMBL" id="CP000780">
    <property type="protein sequence ID" value="ABS56752.1"/>
    <property type="molecule type" value="Genomic_DNA"/>
</dbReference>
<dbReference type="RefSeq" id="WP_012107812.1">
    <property type="nucleotide sequence ID" value="NC_009712.1"/>
</dbReference>
<dbReference type="SMR" id="A7IAJ1"/>
<dbReference type="STRING" id="456442.Mboo_2238"/>
<dbReference type="GeneID" id="5410366"/>
<dbReference type="KEGG" id="mbn:Mboo_2238"/>
<dbReference type="eggNOG" id="arCOG04186">
    <property type="taxonomic scope" value="Archaea"/>
</dbReference>
<dbReference type="HOGENOM" id="CLU_062507_1_0_2"/>
<dbReference type="OrthoDB" id="30639at2157"/>
<dbReference type="Proteomes" id="UP000002408">
    <property type="component" value="Chromosome"/>
</dbReference>
<dbReference type="GO" id="GO:1990904">
    <property type="term" value="C:ribonucleoprotein complex"/>
    <property type="evidence" value="ECO:0007669"/>
    <property type="project" value="UniProtKB-KW"/>
</dbReference>
<dbReference type="GO" id="GO:0005840">
    <property type="term" value="C:ribosome"/>
    <property type="evidence" value="ECO:0007669"/>
    <property type="project" value="UniProtKB-KW"/>
</dbReference>
<dbReference type="GO" id="GO:0003735">
    <property type="term" value="F:structural constituent of ribosome"/>
    <property type="evidence" value="ECO:0007669"/>
    <property type="project" value="InterPro"/>
</dbReference>
<dbReference type="GO" id="GO:0006412">
    <property type="term" value="P:translation"/>
    <property type="evidence" value="ECO:0007669"/>
    <property type="project" value="UniProtKB-UniRule"/>
</dbReference>
<dbReference type="HAMAP" id="MF_00359">
    <property type="entry name" value="Ribosomal_eS1"/>
    <property type="match status" value="1"/>
</dbReference>
<dbReference type="InterPro" id="IPR001593">
    <property type="entry name" value="Ribosomal_eS1"/>
</dbReference>
<dbReference type="InterPro" id="IPR030838">
    <property type="entry name" value="Ribosomal_eS1_arc"/>
</dbReference>
<dbReference type="NCBIfam" id="NF003142">
    <property type="entry name" value="PRK04057.1"/>
    <property type="match status" value="1"/>
</dbReference>
<dbReference type="Pfam" id="PF01015">
    <property type="entry name" value="Ribosomal_S3Ae"/>
    <property type="match status" value="1"/>
</dbReference>
<dbReference type="SMART" id="SM01397">
    <property type="entry name" value="Ribosomal_S3Ae"/>
    <property type="match status" value="1"/>
</dbReference>
<protein>
    <recommendedName>
        <fullName evidence="1">Small ribosomal subunit protein eS1</fullName>
    </recommendedName>
    <alternativeName>
        <fullName evidence="2">30S ribosomal protein S3Ae</fullName>
    </alternativeName>
    <alternativeName>
        <fullName evidence="1">Ribosomal protein S1e</fullName>
    </alternativeName>
</protein>
<accession>A7IAJ1</accession>
<reference key="1">
    <citation type="journal article" date="2015" name="Microbiology">
        <title>Genome of Methanoregula boonei 6A8 reveals adaptations to oligotrophic peatland environments.</title>
        <authorList>
            <person name="Braeuer S."/>
            <person name="Cadillo-Quiroz H."/>
            <person name="Kyrpides N."/>
            <person name="Woyke T."/>
            <person name="Goodwin L."/>
            <person name="Detter C."/>
            <person name="Podell S."/>
            <person name="Yavitt J.B."/>
            <person name="Zinder S.H."/>
        </authorList>
    </citation>
    <scope>NUCLEOTIDE SEQUENCE [LARGE SCALE GENOMIC DNA]</scope>
    <source>
        <strain>DSM 21154 / JCM 14090 / 6A8</strain>
    </source>
</reference>
<gene>
    <name evidence="1" type="primary">rps3ae</name>
    <name type="ordered locus">Mboo_2238</name>
</gene>
<name>RS3A_METB6</name>
<proteinExistence type="inferred from homology"/>
<organism>
    <name type="scientific">Methanoregula boonei (strain DSM 21154 / JCM 14090 / 6A8)</name>
    <dbReference type="NCBI Taxonomy" id="456442"/>
    <lineage>
        <taxon>Archaea</taxon>
        <taxon>Methanobacteriati</taxon>
        <taxon>Methanobacteriota</taxon>
        <taxon>Stenosarchaea group</taxon>
        <taxon>Methanomicrobia</taxon>
        <taxon>Methanomicrobiales</taxon>
        <taxon>Methanoregulaceae</taxon>
        <taxon>Methanoregula</taxon>
    </lineage>
</organism>
<feature type="chain" id="PRO_1000133500" description="Small ribosomal subunit protein eS1">
    <location>
        <begin position="1"/>
        <end position="201"/>
    </location>
</feature>
<keyword id="KW-1185">Reference proteome</keyword>
<keyword id="KW-0687">Ribonucleoprotein</keyword>
<keyword id="KW-0689">Ribosomal protein</keyword>
<evidence type="ECO:0000255" key="1">
    <source>
        <dbReference type="HAMAP-Rule" id="MF_00359"/>
    </source>
</evidence>
<evidence type="ECO:0000305" key="2"/>